<organism>
    <name type="scientific">Acinetobacter baumannii (strain ATCC 17978 / DSM 105126 / CIP 53.77 / LMG 1025 / NCDC KC755 / 5377)</name>
    <dbReference type="NCBI Taxonomy" id="400667"/>
    <lineage>
        <taxon>Bacteria</taxon>
        <taxon>Pseudomonadati</taxon>
        <taxon>Pseudomonadota</taxon>
        <taxon>Gammaproteobacteria</taxon>
        <taxon>Moraxellales</taxon>
        <taxon>Moraxellaceae</taxon>
        <taxon>Acinetobacter</taxon>
        <taxon>Acinetobacter calcoaceticus/baumannii complex</taxon>
    </lineage>
</organism>
<name>RLME_ACIBT</name>
<accession>A3M851</accession>
<feature type="chain" id="PRO_0000300585" description="Ribosomal RNA large subunit methyltransferase E">
    <location>
        <begin position="1"/>
        <end position="216"/>
    </location>
</feature>
<feature type="active site" description="Proton acceptor" evidence="1">
    <location>
        <position position="168"/>
    </location>
</feature>
<feature type="binding site" evidence="1">
    <location>
        <position position="67"/>
    </location>
    <ligand>
        <name>S-adenosyl-L-methionine</name>
        <dbReference type="ChEBI" id="CHEBI:59789"/>
    </ligand>
</feature>
<feature type="binding site" evidence="1">
    <location>
        <position position="69"/>
    </location>
    <ligand>
        <name>S-adenosyl-L-methionine</name>
        <dbReference type="ChEBI" id="CHEBI:59789"/>
    </ligand>
</feature>
<feature type="binding site" evidence="1">
    <location>
        <position position="87"/>
    </location>
    <ligand>
        <name>S-adenosyl-L-methionine</name>
        <dbReference type="ChEBI" id="CHEBI:59789"/>
    </ligand>
</feature>
<feature type="binding site" evidence="1">
    <location>
        <position position="103"/>
    </location>
    <ligand>
        <name>S-adenosyl-L-methionine</name>
        <dbReference type="ChEBI" id="CHEBI:59789"/>
    </ligand>
</feature>
<feature type="binding site" evidence="1">
    <location>
        <position position="128"/>
    </location>
    <ligand>
        <name>S-adenosyl-L-methionine</name>
        <dbReference type="ChEBI" id="CHEBI:59789"/>
    </ligand>
</feature>
<proteinExistence type="inferred from homology"/>
<dbReference type="EC" id="2.1.1.166" evidence="1"/>
<dbReference type="EMBL" id="CP000521">
    <property type="protein sequence ID" value="ABO13095.2"/>
    <property type="molecule type" value="Genomic_DNA"/>
</dbReference>
<dbReference type="RefSeq" id="WP_000235573.1">
    <property type="nucleotide sequence ID" value="NZ_CP053098.1"/>
</dbReference>
<dbReference type="SMR" id="A3M851"/>
<dbReference type="GeneID" id="92894959"/>
<dbReference type="KEGG" id="acb:A1S_2682"/>
<dbReference type="HOGENOM" id="CLU_009422_4_0_6"/>
<dbReference type="GO" id="GO:0005737">
    <property type="term" value="C:cytoplasm"/>
    <property type="evidence" value="ECO:0007669"/>
    <property type="project" value="UniProtKB-SubCell"/>
</dbReference>
<dbReference type="GO" id="GO:0008650">
    <property type="term" value="F:rRNA (uridine-2'-O-)-methyltransferase activity"/>
    <property type="evidence" value="ECO:0007669"/>
    <property type="project" value="UniProtKB-UniRule"/>
</dbReference>
<dbReference type="FunFam" id="3.40.50.150:FF:000005">
    <property type="entry name" value="Ribosomal RNA large subunit methyltransferase E"/>
    <property type="match status" value="1"/>
</dbReference>
<dbReference type="Gene3D" id="3.40.50.150">
    <property type="entry name" value="Vaccinia Virus protein VP39"/>
    <property type="match status" value="1"/>
</dbReference>
<dbReference type="HAMAP" id="MF_01547">
    <property type="entry name" value="RNA_methyltr_E"/>
    <property type="match status" value="1"/>
</dbReference>
<dbReference type="InterPro" id="IPR050082">
    <property type="entry name" value="RNA_methyltr_RlmE"/>
</dbReference>
<dbReference type="InterPro" id="IPR002877">
    <property type="entry name" value="RNA_MeTrfase_FtsJ_dom"/>
</dbReference>
<dbReference type="InterPro" id="IPR015507">
    <property type="entry name" value="rRNA-MeTfrase_E"/>
</dbReference>
<dbReference type="InterPro" id="IPR029063">
    <property type="entry name" value="SAM-dependent_MTases_sf"/>
</dbReference>
<dbReference type="NCBIfam" id="NF008390">
    <property type="entry name" value="PRK11188.1"/>
    <property type="match status" value="1"/>
</dbReference>
<dbReference type="PANTHER" id="PTHR10920">
    <property type="entry name" value="RIBOSOMAL RNA METHYLTRANSFERASE"/>
    <property type="match status" value="1"/>
</dbReference>
<dbReference type="PANTHER" id="PTHR10920:SF18">
    <property type="entry name" value="RRNA METHYLTRANSFERASE 2, MITOCHONDRIAL"/>
    <property type="match status" value="1"/>
</dbReference>
<dbReference type="Pfam" id="PF01728">
    <property type="entry name" value="FtsJ"/>
    <property type="match status" value="1"/>
</dbReference>
<dbReference type="PIRSF" id="PIRSF005461">
    <property type="entry name" value="23S_rRNA_mtase"/>
    <property type="match status" value="1"/>
</dbReference>
<dbReference type="SUPFAM" id="SSF53335">
    <property type="entry name" value="S-adenosyl-L-methionine-dependent methyltransferases"/>
    <property type="match status" value="1"/>
</dbReference>
<protein>
    <recommendedName>
        <fullName evidence="1">Ribosomal RNA large subunit methyltransferase E</fullName>
        <ecNumber evidence="1">2.1.1.166</ecNumber>
    </recommendedName>
    <alternativeName>
        <fullName evidence="1">23S rRNA Um2552 methyltransferase</fullName>
    </alternativeName>
    <alternativeName>
        <fullName evidence="1">rRNA (uridine-2'-O-)-methyltransferase</fullName>
    </alternativeName>
</protein>
<sequence>MATRITNQKLSKSSRAWMREHLDDPFVKKAQKEGYRARAAYKLLEIQEKYKLIKPGMTVVDLGAAPGSWSQIAGKLVGSKGLVIASDILPMDALPDVTFLQGDFREEAVFEKLLNILNGRQVDIVISDMAPNTSGNRAVDQPRQIYLCELALDFAQKVLGPNGQFVVKVFQGAGFDEFRKQVVDSFDVLKTAKPAASRARSKEVFLVGQGRKKALQ</sequence>
<reference key="1">
    <citation type="journal article" date="2007" name="Genes Dev.">
        <title>New insights into Acinetobacter baumannii pathogenesis revealed by high-density pyrosequencing and transposon mutagenesis.</title>
        <authorList>
            <person name="Smith M.G."/>
            <person name="Gianoulis T.A."/>
            <person name="Pukatzki S."/>
            <person name="Mekalanos J.J."/>
            <person name="Ornston L.N."/>
            <person name="Gerstein M."/>
            <person name="Snyder M."/>
        </authorList>
    </citation>
    <scope>NUCLEOTIDE SEQUENCE [LARGE SCALE GENOMIC DNA]</scope>
    <source>
        <strain>ATCC 17978 / DSM 105126 / CIP 53.77 / LMG 1025 / NCDC KC755 / 5377</strain>
    </source>
</reference>
<gene>
    <name evidence="1" type="primary">rlmE</name>
    <name evidence="1" type="synonym">ftsJ</name>
    <name evidence="1" type="synonym">rrmJ</name>
    <name type="ordered locus">A1S_2682</name>
</gene>
<evidence type="ECO:0000255" key="1">
    <source>
        <dbReference type="HAMAP-Rule" id="MF_01547"/>
    </source>
</evidence>
<keyword id="KW-0963">Cytoplasm</keyword>
<keyword id="KW-0489">Methyltransferase</keyword>
<keyword id="KW-0698">rRNA processing</keyword>
<keyword id="KW-0949">S-adenosyl-L-methionine</keyword>
<keyword id="KW-0808">Transferase</keyword>
<comment type="function">
    <text evidence="1">Specifically methylates the uridine in position 2552 of 23S rRNA at the 2'-O position of the ribose in the fully assembled 50S ribosomal subunit.</text>
</comment>
<comment type="catalytic activity">
    <reaction evidence="1">
        <text>uridine(2552) in 23S rRNA + S-adenosyl-L-methionine = 2'-O-methyluridine(2552) in 23S rRNA + S-adenosyl-L-homocysteine + H(+)</text>
        <dbReference type="Rhea" id="RHEA:42720"/>
        <dbReference type="Rhea" id="RHEA-COMP:10202"/>
        <dbReference type="Rhea" id="RHEA-COMP:10203"/>
        <dbReference type="ChEBI" id="CHEBI:15378"/>
        <dbReference type="ChEBI" id="CHEBI:57856"/>
        <dbReference type="ChEBI" id="CHEBI:59789"/>
        <dbReference type="ChEBI" id="CHEBI:65315"/>
        <dbReference type="ChEBI" id="CHEBI:74478"/>
        <dbReference type="EC" id="2.1.1.166"/>
    </reaction>
</comment>
<comment type="subcellular location">
    <subcellularLocation>
        <location evidence="1">Cytoplasm</location>
    </subcellularLocation>
</comment>
<comment type="similarity">
    <text evidence="1">Belongs to the class I-like SAM-binding methyltransferase superfamily. RNA methyltransferase RlmE family.</text>
</comment>